<name>LYSC_TRAVT</name>
<protein>
    <recommendedName>
        <fullName>Lysozyme C</fullName>
        <ecNumber>3.2.1.17</ecNumber>
    </recommendedName>
    <alternativeName>
        <fullName>1,4-beta-N-acetylmuramidase C</fullName>
    </alternativeName>
</protein>
<reference key="1">
    <citation type="journal article" date="1997" name="Nature">
        <title>Episodic adaptive evolution of primate lysozymes.</title>
        <authorList>
            <person name="Messier W."/>
            <person name="Stewart C.B."/>
        </authorList>
    </citation>
    <scope>NUCLEOTIDE SEQUENCE [GENOMIC DNA]</scope>
    <source>
        <tissue>Blood</tissue>
    </source>
</reference>
<organism>
    <name type="scientific">Trachypithecus vetulus</name>
    <name type="common">Purple-faced langur</name>
    <name type="synonym">Semnopithecus vetulus</name>
    <dbReference type="NCBI Taxonomy" id="54137"/>
    <lineage>
        <taxon>Eukaryota</taxon>
        <taxon>Metazoa</taxon>
        <taxon>Chordata</taxon>
        <taxon>Craniata</taxon>
        <taxon>Vertebrata</taxon>
        <taxon>Euteleostomi</taxon>
        <taxon>Mammalia</taxon>
        <taxon>Eutheria</taxon>
        <taxon>Euarchontoglires</taxon>
        <taxon>Primates</taxon>
        <taxon>Haplorrhini</taxon>
        <taxon>Catarrhini</taxon>
        <taxon>Cercopithecidae</taxon>
        <taxon>Colobinae</taxon>
        <taxon>Trachypithecus</taxon>
    </lineage>
</organism>
<feature type="signal peptide" evidence="2">
    <location>
        <begin position="1"/>
        <end position="18"/>
    </location>
</feature>
<feature type="chain" id="PRO_0000018492" description="Lysozyme C">
    <location>
        <begin position="19"/>
        <end position="148"/>
    </location>
</feature>
<feature type="domain" description="C-type lysozyme" evidence="3">
    <location>
        <begin position="19"/>
        <end position="148"/>
    </location>
</feature>
<feature type="active site" evidence="3">
    <location>
        <position position="53"/>
    </location>
</feature>
<feature type="active site" evidence="3">
    <location>
        <position position="71"/>
    </location>
</feature>
<feature type="disulfide bond" evidence="3">
    <location>
        <begin position="24"/>
        <end position="146"/>
    </location>
</feature>
<feature type="disulfide bond" evidence="3">
    <location>
        <begin position="48"/>
        <end position="134"/>
    </location>
</feature>
<feature type="disulfide bond" evidence="3">
    <location>
        <begin position="83"/>
        <end position="99"/>
    </location>
</feature>
<feature type="disulfide bond" evidence="3">
    <location>
        <begin position="95"/>
        <end position="113"/>
    </location>
</feature>
<sequence length="148" mass="16219">MKALTILGLVLLSVTVQGKIFERCELARTLKKLGLDGYKGVSLANWVCLAKWESGYNTEATNYNPGDESTDYGIFQINSRYWCNNGKTPGAVDACHISCSALLQNNIADAVACAKRVVSDPQGIRAWVAWRNHCQNKDVSQYVKGCGV</sequence>
<accession>P67978</accession>
<accession>P07232</accession>
<gene>
    <name type="primary">LYZ</name>
    <name type="synonym">LZM</name>
</gene>
<keyword id="KW-0929">Antimicrobial</keyword>
<keyword id="KW-0081">Bacteriolytic enzyme</keyword>
<keyword id="KW-0222">Digestion</keyword>
<keyword id="KW-1015">Disulfide bond</keyword>
<keyword id="KW-0326">Glycosidase</keyword>
<keyword id="KW-0378">Hydrolase</keyword>
<keyword id="KW-0964">Secreted</keyword>
<keyword id="KW-0732">Signal</keyword>
<dbReference type="EC" id="3.2.1.17"/>
<dbReference type="EMBL" id="U76940">
    <property type="protein sequence ID" value="AAB41216.1"/>
    <property type="molecule type" value="Genomic_DNA"/>
</dbReference>
<dbReference type="EMBL" id="U76938">
    <property type="protein sequence ID" value="AAB41216.1"/>
    <property type="status" value="JOINED"/>
    <property type="molecule type" value="Genomic_DNA"/>
</dbReference>
<dbReference type="EMBL" id="U76939">
    <property type="protein sequence ID" value="AAB41216.1"/>
    <property type="status" value="JOINED"/>
    <property type="molecule type" value="Genomic_DNA"/>
</dbReference>
<dbReference type="SMR" id="P67978"/>
<dbReference type="GO" id="GO:0005576">
    <property type="term" value="C:extracellular region"/>
    <property type="evidence" value="ECO:0007669"/>
    <property type="project" value="UniProtKB-SubCell"/>
</dbReference>
<dbReference type="GO" id="GO:0003796">
    <property type="term" value="F:lysozyme activity"/>
    <property type="evidence" value="ECO:0007669"/>
    <property type="project" value="UniProtKB-EC"/>
</dbReference>
<dbReference type="GO" id="GO:0050829">
    <property type="term" value="P:defense response to Gram-negative bacterium"/>
    <property type="evidence" value="ECO:0007669"/>
    <property type="project" value="TreeGrafter"/>
</dbReference>
<dbReference type="GO" id="GO:0050830">
    <property type="term" value="P:defense response to Gram-positive bacterium"/>
    <property type="evidence" value="ECO:0007669"/>
    <property type="project" value="TreeGrafter"/>
</dbReference>
<dbReference type="GO" id="GO:0007586">
    <property type="term" value="P:digestion"/>
    <property type="evidence" value="ECO:0007669"/>
    <property type="project" value="UniProtKB-KW"/>
</dbReference>
<dbReference type="GO" id="GO:0031640">
    <property type="term" value="P:killing of cells of another organism"/>
    <property type="evidence" value="ECO:0007669"/>
    <property type="project" value="UniProtKB-KW"/>
</dbReference>
<dbReference type="CDD" id="cd16897">
    <property type="entry name" value="LYZ_C"/>
    <property type="match status" value="1"/>
</dbReference>
<dbReference type="FunFam" id="1.10.530.10:FF:000001">
    <property type="entry name" value="Lysozyme C"/>
    <property type="match status" value="1"/>
</dbReference>
<dbReference type="Gene3D" id="1.10.530.10">
    <property type="match status" value="1"/>
</dbReference>
<dbReference type="InterPro" id="IPR001916">
    <property type="entry name" value="Glyco_hydro_22"/>
</dbReference>
<dbReference type="InterPro" id="IPR019799">
    <property type="entry name" value="Glyco_hydro_22_CS"/>
</dbReference>
<dbReference type="InterPro" id="IPR000974">
    <property type="entry name" value="Glyco_hydro_22_lys"/>
</dbReference>
<dbReference type="InterPro" id="IPR023346">
    <property type="entry name" value="Lysozyme-like_dom_sf"/>
</dbReference>
<dbReference type="PANTHER" id="PTHR11407">
    <property type="entry name" value="LYSOZYME C"/>
    <property type="match status" value="1"/>
</dbReference>
<dbReference type="PANTHER" id="PTHR11407:SF28">
    <property type="entry name" value="LYSOZYME C"/>
    <property type="match status" value="1"/>
</dbReference>
<dbReference type="Pfam" id="PF00062">
    <property type="entry name" value="Lys"/>
    <property type="match status" value="1"/>
</dbReference>
<dbReference type="PRINTS" id="PR00137">
    <property type="entry name" value="LYSOZYME"/>
</dbReference>
<dbReference type="PRINTS" id="PR00135">
    <property type="entry name" value="LYZLACT"/>
</dbReference>
<dbReference type="SMART" id="SM00263">
    <property type="entry name" value="LYZ1"/>
    <property type="match status" value="1"/>
</dbReference>
<dbReference type="SUPFAM" id="SSF53955">
    <property type="entry name" value="Lysozyme-like"/>
    <property type="match status" value="1"/>
</dbReference>
<dbReference type="PROSITE" id="PS00128">
    <property type="entry name" value="GLYCOSYL_HYDROL_F22_1"/>
    <property type="match status" value="1"/>
</dbReference>
<dbReference type="PROSITE" id="PS51348">
    <property type="entry name" value="GLYCOSYL_HYDROL_F22_2"/>
    <property type="match status" value="1"/>
</dbReference>
<proteinExistence type="inferred from homology"/>
<evidence type="ECO:0000250" key="1"/>
<evidence type="ECO:0000255" key="2"/>
<evidence type="ECO:0000255" key="3">
    <source>
        <dbReference type="PROSITE-ProRule" id="PRU00680"/>
    </source>
</evidence>
<comment type="function">
    <text>Lysozymes have primarily a bacteriolytic function; those in tissues and body fluids are associated with the monocyte-macrophage system and enhance the activity of immunoagents. Also plays a role in digestion in this species.</text>
</comment>
<comment type="catalytic activity">
    <reaction>
        <text>Hydrolysis of (1-&gt;4)-beta-linkages between N-acetylmuramic acid and N-acetyl-D-glucosamine residues in a peptidoglycan and between N-acetyl-D-glucosamine residues in chitodextrins.</text>
        <dbReference type="EC" id="3.2.1.17"/>
    </reaction>
</comment>
<comment type="subunit">
    <text>Monomer.</text>
</comment>
<comment type="subcellular location">
    <subcellularLocation>
        <location evidence="1">Secreted</location>
    </subcellularLocation>
</comment>
<comment type="miscellaneous">
    <text>Lysozyme C is capable of both hydrolysis and transglycosylation; it also shows a slight esterase activity. It acts rapidly on both peptide-substituted and unsubstituted peptidoglycan, and slowly on chitin oligosaccharides.</text>
</comment>
<comment type="similarity">
    <text evidence="3">Belongs to the glycosyl hydrolase 22 family.</text>
</comment>